<accession>Q2UGZ7</accession>
<name>ATG1_ASPOR</name>
<reference key="1">
    <citation type="journal article" date="2005" name="Nature">
        <title>Genome sequencing and analysis of Aspergillus oryzae.</title>
        <authorList>
            <person name="Machida M."/>
            <person name="Asai K."/>
            <person name="Sano M."/>
            <person name="Tanaka T."/>
            <person name="Kumagai T."/>
            <person name="Terai G."/>
            <person name="Kusumoto K."/>
            <person name="Arima T."/>
            <person name="Akita O."/>
            <person name="Kashiwagi Y."/>
            <person name="Abe K."/>
            <person name="Gomi K."/>
            <person name="Horiuchi H."/>
            <person name="Kitamoto K."/>
            <person name="Kobayashi T."/>
            <person name="Takeuchi M."/>
            <person name="Denning D.W."/>
            <person name="Galagan J.E."/>
            <person name="Nierman W.C."/>
            <person name="Yu J."/>
            <person name="Archer D.B."/>
            <person name="Bennett J.W."/>
            <person name="Bhatnagar D."/>
            <person name="Cleveland T.E."/>
            <person name="Fedorova N.D."/>
            <person name="Gotoh O."/>
            <person name="Horikawa H."/>
            <person name="Hosoyama A."/>
            <person name="Ichinomiya M."/>
            <person name="Igarashi R."/>
            <person name="Iwashita K."/>
            <person name="Juvvadi P.R."/>
            <person name="Kato M."/>
            <person name="Kato Y."/>
            <person name="Kin T."/>
            <person name="Kokubun A."/>
            <person name="Maeda H."/>
            <person name="Maeyama N."/>
            <person name="Maruyama J."/>
            <person name="Nagasaki H."/>
            <person name="Nakajima T."/>
            <person name="Oda K."/>
            <person name="Okada K."/>
            <person name="Paulsen I."/>
            <person name="Sakamoto K."/>
            <person name="Sawano T."/>
            <person name="Takahashi M."/>
            <person name="Takase K."/>
            <person name="Terabayashi Y."/>
            <person name="Wortman J.R."/>
            <person name="Yamada O."/>
            <person name="Yamagata Y."/>
            <person name="Anazawa H."/>
            <person name="Hata Y."/>
            <person name="Koide Y."/>
            <person name="Komori T."/>
            <person name="Koyama Y."/>
            <person name="Minetoki T."/>
            <person name="Suharnan S."/>
            <person name="Tanaka A."/>
            <person name="Isono K."/>
            <person name="Kuhara S."/>
            <person name="Ogasawara N."/>
            <person name="Kikuchi H."/>
        </authorList>
    </citation>
    <scope>NUCLEOTIDE SEQUENCE [LARGE SCALE GENOMIC DNA]</scope>
    <source>
        <strain>ATCC 42149 / RIB 40</strain>
    </source>
</reference>
<reference key="2">
    <citation type="journal article" date="2013" name="FEMS Microbiol. Lett.">
        <title>Functional analysis of Aoatg1 and detection of the Cvt pathway in Aspergillus oryzae.</title>
        <authorList>
            <person name="Yanagisawa S."/>
            <person name="Kikuma T."/>
            <person name="Kitamoto K."/>
        </authorList>
    </citation>
    <scope>SUBCELLULAR LOCATION</scope>
    <scope>FUNCTION</scope>
</reference>
<evidence type="ECO:0000250" key="1">
    <source>
        <dbReference type="UniProtKB" id="P53104"/>
    </source>
</evidence>
<evidence type="ECO:0000255" key="2">
    <source>
        <dbReference type="PROSITE-ProRule" id="PRU00159"/>
    </source>
</evidence>
<evidence type="ECO:0000255" key="3">
    <source>
        <dbReference type="PROSITE-ProRule" id="PRU10027"/>
    </source>
</evidence>
<evidence type="ECO:0000256" key="4">
    <source>
        <dbReference type="SAM" id="MobiDB-lite"/>
    </source>
</evidence>
<evidence type="ECO:0000269" key="5">
    <source>
    </source>
</evidence>
<evidence type="ECO:0000303" key="6">
    <source>
    </source>
</evidence>
<evidence type="ECO:0000303" key="7">
    <source>
    </source>
</evidence>
<comment type="function">
    <text evidence="1 5">Serine/threonine protein kinase involved in the cytoplasm to vacuole transport (Cvt) and found to be essential in autophagy, where it is required for the formation of autophagosomes. Involved in the clearance of protein aggregates which cannot be efficiently cleared by the proteasome. Required for selective autophagic degradation of the nucleus (nucleophagy) as well as for mitophagy which contributes to regulate mitochondrial quantity and quality by eliminating the mitochondria to a basal level to fulfill cellular energy requirements and preventing excess ROS production. Also involved in endoplasmic reticulum-specific autophagic process, in selective removal of ER-associated degradation (ERAD) substrates. Plays a key role in ATG9 and ATG23 cycling through the pre-autophagosomal structure and is necessary to promote ATG18 binding to ATG9 through phosphorylation of ATG9. Catalyzes phosphorylation of ATG4, decreasing the interaction between ATG4 and ATG8 and impairing deconjugation of PE-conjugated forms of ATG8 (By similarity). Required for conidiation and development of aerial hyphae (PubMed:23136971).</text>
</comment>
<comment type="catalytic activity">
    <reaction evidence="1">
        <text>L-seryl-[protein] + ATP = O-phospho-L-seryl-[protein] + ADP + H(+)</text>
        <dbReference type="Rhea" id="RHEA:17989"/>
        <dbReference type="Rhea" id="RHEA-COMP:9863"/>
        <dbReference type="Rhea" id="RHEA-COMP:11604"/>
        <dbReference type="ChEBI" id="CHEBI:15378"/>
        <dbReference type="ChEBI" id="CHEBI:29999"/>
        <dbReference type="ChEBI" id="CHEBI:30616"/>
        <dbReference type="ChEBI" id="CHEBI:83421"/>
        <dbReference type="ChEBI" id="CHEBI:456216"/>
        <dbReference type="EC" id="2.7.11.1"/>
    </reaction>
</comment>
<comment type="catalytic activity">
    <reaction evidence="1">
        <text>L-threonyl-[protein] + ATP = O-phospho-L-threonyl-[protein] + ADP + H(+)</text>
        <dbReference type="Rhea" id="RHEA:46608"/>
        <dbReference type="Rhea" id="RHEA-COMP:11060"/>
        <dbReference type="Rhea" id="RHEA-COMP:11605"/>
        <dbReference type="ChEBI" id="CHEBI:15378"/>
        <dbReference type="ChEBI" id="CHEBI:30013"/>
        <dbReference type="ChEBI" id="CHEBI:30616"/>
        <dbReference type="ChEBI" id="CHEBI:61977"/>
        <dbReference type="ChEBI" id="CHEBI:456216"/>
        <dbReference type="EC" id="2.7.11.1"/>
    </reaction>
</comment>
<comment type="subunit">
    <text evidence="1">Homodimer. Forms a ternary complex with ATG13 and ATG17.</text>
</comment>
<comment type="subcellular location">
    <subcellularLocation>
        <location evidence="5">Cytoplasm</location>
    </subcellularLocation>
    <subcellularLocation>
        <location evidence="5">Preautophagosomal structure membrane</location>
        <topology evidence="5">Peripheral membrane protein</topology>
    </subcellularLocation>
</comment>
<comment type="similarity">
    <text evidence="2">Belongs to the protein kinase superfamily. Ser/Thr protein kinase family. APG1/unc-51/ULK1 subfamily.</text>
</comment>
<keyword id="KW-0067">ATP-binding</keyword>
<keyword id="KW-0072">Autophagy</keyword>
<keyword id="KW-0963">Cytoplasm</keyword>
<keyword id="KW-0418">Kinase</keyword>
<keyword id="KW-0472">Membrane</keyword>
<keyword id="KW-0547">Nucleotide-binding</keyword>
<keyword id="KW-0653">Protein transport</keyword>
<keyword id="KW-1185">Reference proteome</keyword>
<keyword id="KW-0723">Serine/threonine-protein kinase</keyword>
<keyword id="KW-0808">Transferase</keyword>
<keyword id="KW-0813">Transport</keyword>
<protein>
    <recommendedName>
        <fullName evidence="1">Serine/threonine-protein kinase atg1</fullName>
        <ecNumber evidence="1">2.7.11.1</ecNumber>
    </recommendedName>
    <alternativeName>
        <fullName evidence="1">Autophagy-related protein 1</fullName>
    </alternativeName>
</protein>
<dbReference type="EC" id="2.7.11.1" evidence="1"/>
<dbReference type="EMBL" id="BA000051">
    <property type="protein sequence ID" value="BAE59168.1"/>
    <property type="molecule type" value="Genomic_DNA"/>
</dbReference>
<dbReference type="SMR" id="Q2UGZ7"/>
<dbReference type="STRING" id="510516.Q2UGZ7"/>
<dbReference type="EnsemblFungi" id="BAE59168">
    <property type="protein sequence ID" value="BAE59168"/>
    <property type="gene ID" value="AO090023000647"/>
</dbReference>
<dbReference type="HOGENOM" id="CLU_006447_0_0_1"/>
<dbReference type="OMA" id="INNVVQW"/>
<dbReference type="OrthoDB" id="6513151at2759"/>
<dbReference type="Proteomes" id="UP000006564">
    <property type="component" value="Chromosome 3"/>
</dbReference>
<dbReference type="GO" id="GO:1990316">
    <property type="term" value="C:Atg1/ULK1 kinase complex"/>
    <property type="evidence" value="ECO:0007669"/>
    <property type="project" value="EnsemblFungi"/>
</dbReference>
<dbReference type="GO" id="GO:0000421">
    <property type="term" value="C:autophagosome membrane"/>
    <property type="evidence" value="ECO:0007669"/>
    <property type="project" value="EnsemblFungi"/>
</dbReference>
<dbReference type="GO" id="GO:0005829">
    <property type="term" value="C:cytosol"/>
    <property type="evidence" value="ECO:0007669"/>
    <property type="project" value="EnsemblFungi"/>
</dbReference>
<dbReference type="GO" id="GO:0061908">
    <property type="term" value="C:phagophore"/>
    <property type="evidence" value="ECO:0007669"/>
    <property type="project" value="EnsemblFungi"/>
</dbReference>
<dbReference type="GO" id="GO:0034045">
    <property type="term" value="C:phagophore assembly site membrane"/>
    <property type="evidence" value="ECO:0007669"/>
    <property type="project" value="UniProtKB-SubCell"/>
</dbReference>
<dbReference type="GO" id="GO:0120095">
    <property type="term" value="C:vacuole-isolation membrane contact site"/>
    <property type="evidence" value="ECO:0007669"/>
    <property type="project" value="EnsemblFungi"/>
</dbReference>
<dbReference type="GO" id="GO:0005524">
    <property type="term" value="F:ATP binding"/>
    <property type="evidence" value="ECO:0007669"/>
    <property type="project" value="UniProtKB-KW"/>
</dbReference>
<dbReference type="GO" id="GO:0106310">
    <property type="term" value="F:protein serine kinase activity"/>
    <property type="evidence" value="ECO:0007669"/>
    <property type="project" value="RHEA"/>
</dbReference>
<dbReference type="GO" id="GO:0004674">
    <property type="term" value="F:protein serine/threonine kinase activity"/>
    <property type="evidence" value="ECO:0007669"/>
    <property type="project" value="UniProtKB-KW"/>
</dbReference>
<dbReference type="GO" id="GO:0000422">
    <property type="term" value="P:autophagy of mitochondrion"/>
    <property type="evidence" value="ECO:0007669"/>
    <property type="project" value="EnsemblFungi"/>
</dbReference>
<dbReference type="GO" id="GO:0006995">
    <property type="term" value="P:cellular response to nitrogen starvation"/>
    <property type="evidence" value="ECO:0007669"/>
    <property type="project" value="EnsemblFungi"/>
</dbReference>
<dbReference type="GO" id="GO:0051365">
    <property type="term" value="P:cellular response to potassium ion starvation"/>
    <property type="evidence" value="ECO:0007669"/>
    <property type="project" value="EnsemblFungi"/>
</dbReference>
<dbReference type="GO" id="GO:0034727">
    <property type="term" value="P:piecemeal microautophagy of the nucleus"/>
    <property type="evidence" value="ECO:0007669"/>
    <property type="project" value="EnsemblFungi"/>
</dbReference>
<dbReference type="GO" id="GO:0034497">
    <property type="term" value="P:protein localization to phagophore assembly site"/>
    <property type="evidence" value="ECO:0007669"/>
    <property type="project" value="EnsemblFungi"/>
</dbReference>
<dbReference type="GO" id="GO:0015031">
    <property type="term" value="P:protein transport"/>
    <property type="evidence" value="ECO:0007669"/>
    <property type="project" value="UniProtKB-KW"/>
</dbReference>
<dbReference type="GO" id="GO:0010506">
    <property type="term" value="P:regulation of autophagy"/>
    <property type="evidence" value="ECO:0007669"/>
    <property type="project" value="InterPro"/>
</dbReference>
<dbReference type="GO" id="GO:0061709">
    <property type="term" value="P:reticulophagy"/>
    <property type="evidence" value="ECO:0007669"/>
    <property type="project" value="EnsemblFungi"/>
</dbReference>
<dbReference type="CDD" id="cd14009">
    <property type="entry name" value="STKc_ATG1_ULK_like"/>
    <property type="match status" value="1"/>
</dbReference>
<dbReference type="FunFam" id="1.10.510.10:FF:000817">
    <property type="entry name" value="Serine/threonine-protein kinase ATG1"/>
    <property type="match status" value="1"/>
</dbReference>
<dbReference type="FunFam" id="3.30.200.20:FF:000399">
    <property type="entry name" value="Serine/threonine-protein kinase atg1"/>
    <property type="match status" value="1"/>
</dbReference>
<dbReference type="Gene3D" id="3.30.200.20">
    <property type="entry name" value="Phosphorylase Kinase, domain 1"/>
    <property type="match status" value="1"/>
</dbReference>
<dbReference type="Gene3D" id="1.10.510.10">
    <property type="entry name" value="Transferase(Phosphotransferase) domain 1"/>
    <property type="match status" value="1"/>
</dbReference>
<dbReference type="InterPro" id="IPR045269">
    <property type="entry name" value="Atg1-like"/>
</dbReference>
<dbReference type="InterPro" id="IPR048941">
    <property type="entry name" value="ATG1-like_MIT2"/>
</dbReference>
<dbReference type="InterPro" id="IPR022708">
    <property type="entry name" value="Atg1-like_tMIT"/>
</dbReference>
<dbReference type="InterPro" id="IPR011009">
    <property type="entry name" value="Kinase-like_dom_sf"/>
</dbReference>
<dbReference type="InterPro" id="IPR000719">
    <property type="entry name" value="Prot_kinase_dom"/>
</dbReference>
<dbReference type="InterPro" id="IPR017441">
    <property type="entry name" value="Protein_kinase_ATP_BS"/>
</dbReference>
<dbReference type="InterPro" id="IPR008271">
    <property type="entry name" value="Ser/Thr_kinase_AS"/>
</dbReference>
<dbReference type="PANTHER" id="PTHR24348:SF22">
    <property type="entry name" value="NON-SPECIFIC SERINE_THREONINE PROTEIN KINASE"/>
    <property type="match status" value="1"/>
</dbReference>
<dbReference type="PANTHER" id="PTHR24348">
    <property type="entry name" value="SERINE/THREONINE-PROTEIN KINASE UNC-51-RELATED"/>
    <property type="match status" value="1"/>
</dbReference>
<dbReference type="Pfam" id="PF12063">
    <property type="entry name" value="ATG1-like_MIT1"/>
    <property type="match status" value="1"/>
</dbReference>
<dbReference type="Pfam" id="PF21127">
    <property type="entry name" value="ATG1-like_MIT2"/>
    <property type="match status" value="1"/>
</dbReference>
<dbReference type="Pfam" id="PF00069">
    <property type="entry name" value="Pkinase"/>
    <property type="match status" value="1"/>
</dbReference>
<dbReference type="SMART" id="SM00220">
    <property type="entry name" value="S_TKc"/>
    <property type="match status" value="1"/>
</dbReference>
<dbReference type="SUPFAM" id="SSF56112">
    <property type="entry name" value="Protein kinase-like (PK-like)"/>
    <property type="match status" value="1"/>
</dbReference>
<dbReference type="PROSITE" id="PS00107">
    <property type="entry name" value="PROTEIN_KINASE_ATP"/>
    <property type="match status" value="1"/>
</dbReference>
<dbReference type="PROSITE" id="PS50011">
    <property type="entry name" value="PROTEIN_KINASE_DOM"/>
    <property type="match status" value="1"/>
</dbReference>
<dbReference type="PROSITE" id="PS00108">
    <property type="entry name" value="PROTEIN_KINASE_ST"/>
    <property type="match status" value="1"/>
</dbReference>
<feature type="chain" id="PRO_0000317789" description="Serine/threonine-protein kinase atg1">
    <location>
        <begin position="1"/>
        <end position="934"/>
    </location>
</feature>
<feature type="domain" description="Protein kinase" evidence="2">
    <location>
        <begin position="22"/>
        <end position="328"/>
    </location>
</feature>
<feature type="region of interest" description="Disordered" evidence="4">
    <location>
        <begin position="335"/>
        <end position="432"/>
    </location>
</feature>
<feature type="region of interest" description="Disordered" evidence="4">
    <location>
        <begin position="462"/>
        <end position="481"/>
    </location>
</feature>
<feature type="region of interest" description="Disordered" evidence="4">
    <location>
        <begin position="531"/>
        <end position="580"/>
    </location>
</feature>
<feature type="region of interest" description="Disordered" evidence="4">
    <location>
        <begin position="684"/>
        <end position="703"/>
    </location>
</feature>
<feature type="region of interest" description="Disordered" evidence="4">
    <location>
        <begin position="800"/>
        <end position="822"/>
    </location>
</feature>
<feature type="region of interest" description="Disordered" evidence="4">
    <location>
        <begin position="878"/>
        <end position="900"/>
    </location>
</feature>
<feature type="compositionally biased region" description="Polar residues" evidence="4">
    <location>
        <begin position="340"/>
        <end position="368"/>
    </location>
</feature>
<feature type="compositionally biased region" description="Basic and acidic residues" evidence="4">
    <location>
        <begin position="371"/>
        <end position="386"/>
    </location>
</feature>
<feature type="compositionally biased region" description="Low complexity" evidence="4">
    <location>
        <begin position="538"/>
        <end position="550"/>
    </location>
</feature>
<feature type="compositionally biased region" description="Basic and acidic residues" evidence="4">
    <location>
        <begin position="561"/>
        <end position="577"/>
    </location>
</feature>
<feature type="active site" description="Proton acceptor" evidence="2 3">
    <location>
        <position position="165"/>
    </location>
</feature>
<feature type="binding site" evidence="2">
    <location>
        <begin position="28"/>
        <end position="36"/>
    </location>
    <ligand>
        <name>ATP</name>
        <dbReference type="ChEBI" id="CHEBI:30616"/>
    </ligand>
</feature>
<feature type="binding site" evidence="2">
    <location>
        <position position="51"/>
    </location>
    <ligand>
        <name>ATP</name>
        <dbReference type="ChEBI" id="CHEBI:30616"/>
    </ligand>
</feature>
<proteinExistence type="inferred from homology"/>
<sequence>MSSSHHRRSRETSHAEMPIGRYTRLDEIGRGSFATVYQGVHTKSRTYVAIKSVNLSKLNKKLKENLSSEIHILKGLYHPHIVALIDCHETTSHIHLVMEYCALGDLSLFIKRRDTLGDHRYTQDMIAKYPNPRGGALNEVVVRHFLKQLASALKFLRDRNLIHRDIKPQNLLLCPSPSSYRSGVAQVVPFKGCDESFSPATGLESLPMLKIADFGFARSLPSTSLAETLCGSPLYMAPEILRYEKYDAKADLWSVGTVLYEMVVGKPPFRATNHVELLRKIEKGEDRIKFPEENPASEQIKSLIRMLLKRNPVERMNFSDFFDCDTITGPIPGLIADDAPSTSRRSSVAVNTSGSTSRPQSRTGSRTPTGMKREKDASYPGKKDDQVSYPAAHRPPTQRSDTPPASSPMRRMGSGDRATTSKETVTTTPRRPSVVSLATAPGRQELVDRNATAAVMERQRSRNTYAGVPQTEKQAEKTKEESERAAQEIAFERDYVLVEKRAVEVNAFADELAHSPRIQGGFPRNAYALSRRPGTQGSSTATATSPLATTGKAMQVASGRARADSTHTRQGSYERRYGQSPTSAISKALHMASGRLFGMGFSPPMTITKGGRSPPLGYNPFPAYPAAQGSLMVVGDGARTNVTLDEDAKTVQVIEECATRSDVVYGFAEVKYKQLIPLAPSVQTDPSGRANVPGGERDSTDLTDGGLTVDAVVTLSEEALVLYVKALSLLAKSMDIAGAWWSRKNRGEAFGESAMGRTDATSTLVSNRINNVVQWVRNRFNEVLEKAEFVRLKLIEGQKRLPPDHPSHPSNHSVGPSVGSGASTDVVVSSGVTAEKLMYDRALEMSRAAAINELTGEELSGCEIAYVTAIRMLEAVLEEEEVSRSEPGSGTDRGDARRDGDKAMLDGVRMEDRQVVIKSSIFIVTRKQSSFVLP</sequence>
<organism>
    <name type="scientific">Aspergillus oryzae (strain ATCC 42149 / RIB 40)</name>
    <name type="common">Yellow koji mold</name>
    <dbReference type="NCBI Taxonomy" id="510516"/>
    <lineage>
        <taxon>Eukaryota</taxon>
        <taxon>Fungi</taxon>
        <taxon>Dikarya</taxon>
        <taxon>Ascomycota</taxon>
        <taxon>Pezizomycotina</taxon>
        <taxon>Eurotiomycetes</taxon>
        <taxon>Eurotiomycetidae</taxon>
        <taxon>Eurotiales</taxon>
        <taxon>Aspergillaceae</taxon>
        <taxon>Aspergillus</taxon>
        <taxon>Aspergillus subgen. Circumdati</taxon>
    </lineage>
</organism>
<gene>
    <name evidence="7" type="primary">atg1</name>
    <name evidence="6" type="ORF">AO090023000647</name>
</gene>